<organism>
    <name type="scientific">Streptococcus pyogenes serotype M18 (strain MGAS8232)</name>
    <dbReference type="NCBI Taxonomy" id="186103"/>
    <lineage>
        <taxon>Bacteria</taxon>
        <taxon>Bacillati</taxon>
        <taxon>Bacillota</taxon>
        <taxon>Bacilli</taxon>
        <taxon>Lactobacillales</taxon>
        <taxon>Streptococcaceae</taxon>
        <taxon>Streptococcus</taxon>
    </lineage>
</organism>
<sequence>MTKTLPKDFIFGGATAAYQAEGATHTDGKGPVAWDKYLEDNYWYTAEPASDFYNRYPVDLKLSEEFGVNGIRISIAWSRIFPTGKGDVNPKGVEYYHNLFAECHKRHVEPFVTLHHFDTPEALHSDGDFLNRENIEHFVNYAEFCFKEFSEVNYWTTFNEIGPIGDGQYLVGKFPPGIQYDLAKVFQSHHNMMVSHARAVKLFKDGGYSGEIGVVHALPTKYPFDANNPDDVRAAELEDIIHNKFILDATYLGKYSDKTMEGVNHILEVNGGELDLREEDFVALDAAKDLNDFLGINYYMSDWMQAFDGETEIIHNGKGEKGSSKYQIKGVGRRKAPVDVPKTDWDWIIFPQGLYDQIMRVKADYPNYKKIYITENGLGYKDEFVDNTVYDDGRIDYVKKHLEVISDAISDGANVKGYFMWSLMDVFSWSNGYEKRYGLFYVDFETQERYPKKSAYWYKKVAETQVIE</sequence>
<evidence type="ECO:0000255" key="1">
    <source>
        <dbReference type="HAMAP-Rule" id="MF_01574"/>
    </source>
</evidence>
<keyword id="KW-0326">Glycosidase</keyword>
<keyword id="KW-0378">Hydrolase</keyword>
<gene>
    <name evidence="1" type="primary">lacG</name>
    <name type="ordered locus">spyM18_1984</name>
</gene>
<feature type="chain" id="PRO_0000260737" description="6-phospho-beta-galactosidase">
    <location>
        <begin position="1"/>
        <end position="468"/>
    </location>
</feature>
<feature type="active site" description="Proton donor" evidence="1">
    <location>
        <position position="160"/>
    </location>
</feature>
<feature type="active site" description="Nucleophile" evidence="1">
    <location>
        <position position="375"/>
    </location>
</feature>
<feature type="binding site" evidence="1">
    <location>
        <position position="19"/>
    </location>
    <ligand>
        <name>D-galactose 6-phosphate</name>
        <dbReference type="ChEBI" id="CHEBI:91004"/>
    </ligand>
</feature>
<feature type="binding site" evidence="1">
    <location>
        <position position="116"/>
    </location>
    <ligand>
        <name>D-galactose 6-phosphate</name>
        <dbReference type="ChEBI" id="CHEBI:91004"/>
    </ligand>
</feature>
<feature type="binding site" evidence="1">
    <location>
        <position position="159"/>
    </location>
    <ligand>
        <name>D-galactose 6-phosphate</name>
        <dbReference type="ChEBI" id="CHEBI:91004"/>
    </ligand>
</feature>
<feature type="binding site" evidence="1">
    <location>
        <position position="160"/>
    </location>
    <ligand>
        <name>D-galactose 6-phosphate</name>
        <dbReference type="ChEBI" id="CHEBI:91004"/>
    </ligand>
</feature>
<feature type="binding site" evidence="1">
    <location>
        <position position="297"/>
    </location>
    <ligand>
        <name>D-galactose 6-phosphate</name>
        <dbReference type="ChEBI" id="CHEBI:91004"/>
    </ligand>
</feature>
<feature type="binding site" evidence="1">
    <location>
        <position position="428"/>
    </location>
    <ligand>
        <name>D-galactose 6-phosphate</name>
        <dbReference type="ChEBI" id="CHEBI:91004"/>
    </ligand>
</feature>
<feature type="binding site" evidence="1">
    <location>
        <position position="429"/>
    </location>
    <ligand>
        <name>D-galactose 6-phosphate</name>
        <dbReference type="ChEBI" id="CHEBI:91004"/>
    </ligand>
</feature>
<feature type="binding site" evidence="1">
    <location>
        <position position="435"/>
    </location>
    <ligand>
        <name>D-galactose 6-phosphate</name>
        <dbReference type="ChEBI" id="CHEBI:91004"/>
    </ligand>
</feature>
<feature type="binding site" evidence="1">
    <location>
        <position position="437"/>
    </location>
    <ligand>
        <name>D-galactose 6-phosphate</name>
        <dbReference type="ChEBI" id="CHEBI:91004"/>
    </ligand>
</feature>
<name>LACG_STRP8</name>
<accession>Q8NZE1</accession>
<protein>
    <recommendedName>
        <fullName evidence="1">6-phospho-beta-galactosidase</fullName>
        <ecNumber evidence="1">3.2.1.85</ecNumber>
    </recommendedName>
    <alternativeName>
        <fullName evidence="1">Beta-D-phosphogalactoside galactohydrolase</fullName>
        <shortName evidence="1">PGALase</shortName>
    </alternativeName>
    <alternativeName>
        <fullName evidence="1">P-beta-Gal</fullName>
        <shortName evidence="1">PBG</shortName>
    </alternativeName>
</protein>
<proteinExistence type="inferred from homology"/>
<dbReference type="EC" id="3.2.1.85" evidence="1"/>
<dbReference type="EMBL" id="AE009949">
    <property type="protein sequence ID" value="AAL98470.1"/>
    <property type="molecule type" value="Genomic_DNA"/>
</dbReference>
<dbReference type="RefSeq" id="WP_011018224.1">
    <property type="nucleotide sequence ID" value="NC_003485.1"/>
</dbReference>
<dbReference type="SMR" id="Q8NZE1"/>
<dbReference type="CAZy" id="GH1">
    <property type="family name" value="Glycoside Hydrolase Family 1"/>
</dbReference>
<dbReference type="KEGG" id="spm:spyM18_1984"/>
<dbReference type="HOGENOM" id="CLU_001859_1_3_9"/>
<dbReference type="UniPathway" id="UPA00542">
    <property type="reaction ID" value="UER00605"/>
</dbReference>
<dbReference type="GO" id="GO:0005829">
    <property type="term" value="C:cytosol"/>
    <property type="evidence" value="ECO:0007669"/>
    <property type="project" value="TreeGrafter"/>
</dbReference>
<dbReference type="GO" id="GO:0033920">
    <property type="term" value="F:6-phospho-beta-galactosidase activity"/>
    <property type="evidence" value="ECO:0007669"/>
    <property type="project" value="UniProtKB-UniRule"/>
</dbReference>
<dbReference type="GO" id="GO:0008422">
    <property type="term" value="F:beta-glucosidase activity"/>
    <property type="evidence" value="ECO:0007669"/>
    <property type="project" value="TreeGrafter"/>
</dbReference>
<dbReference type="GO" id="GO:0019512">
    <property type="term" value="P:lactose catabolic process via tagatose-6-phosphate"/>
    <property type="evidence" value="ECO:0007669"/>
    <property type="project" value="InterPro"/>
</dbReference>
<dbReference type="FunFam" id="3.20.20.80:FF:000004">
    <property type="entry name" value="Beta-glucosidase 6-phospho-beta-glucosidase"/>
    <property type="match status" value="1"/>
</dbReference>
<dbReference type="Gene3D" id="3.20.20.80">
    <property type="entry name" value="Glycosidases"/>
    <property type="match status" value="1"/>
</dbReference>
<dbReference type="HAMAP" id="MF_01574">
    <property type="entry name" value="LacG"/>
    <property type="match status" value="1"/>
</dbReference>
<dbReference type="InterPro" id="IPR005928">
    <property type="entry name" value="6P-beta-galactosidase"/>
</dbReference>
<dbReference type="InterPro" id="IPR001360">
    <property type="entry name" value="Glyco_hydro_1"/>
</dbReference>
<dbReference type="InterPro" id="IPR018120">
    <property type="entry name" value="Glyco_hydro_1_AS"/>
</dbReference>
<dbReference type="InterPro" id="IPR033132">
    <property type="entry name" value="Glyco_hydro_1_N_CS"/>
</dbReference>
<dbReference type="InterPro" id="IPR017853">
    <property type="entry name" value="Glycoside_hydrolase_SF"/>
</dbReference>
<dbReference type="NCBIfam" id="TIGR01233">
    <property type="entry name" value="lacG"/>
    <property type="match status" value="1"/>
</dbReference>
<dbReference type="NCBIfam" id="NF010036">
    <property type="entry name" value="PRK13511.1"/>
    <property type="match status" value="1"/>
</dbReference>
<dbReference type="PANTHER" id="PTHR10353">
    <property type="entry name" value="GLYCOSYL HYDROLASE"/>
    <property type="match status" value="1"/>
</dbReference>
<dbReference type="PANTHER" id="PTHR10353:SF36">
    <property type="entry name" value="LP05116P"/>
    <property type="match status" value="1"/>
</dbReference>
<dbReference type="Pfam" id="PF00232">
    <property type="entry name" value="Glyco_hydro_1"/>
    <property type="match status" value="1"/>
</dbReference>
<dbReference type="PRINTS" id="PR00131">
    <property type="entry name" value="GLHYDRLASE1"/>
</dbReference>
<dbReference type="SUPFAM" id="SSF51445">
    <property type="entry name" value="(Trans)glycosidases"/>
    <property type="match status" value="1"/>
</dbReference>
<dbReference type="PROSITE" id="PS00572">
    <property type="entry name" value="GLYCOSYL_HYDROL_F1_1"/>
    <property type="match status" value="1"/>
</dbReference>
<dbReference type="PROSITE" id="PS00653">
    <property type="entry name" value="GLYCOSYL_HYDROL_F1_2"/>
    <property type="match status" value="1"/>
</dbReference>
<comment type="catalytic activity">
    <reaction evidence="1">
        <text>a 6-phospho-beta-D-galactoside + H2O = D-galactose 6-phosphate + an alcohol</text>
        <dbReference type="Rhea" id="RHEA:24568"/>
        <dbReference type="ChEBI" id="CHEBI:15377"/>
        <dbReference type="ChEBI" id="CHEBI:30879"/>
        <dbReference type="ChEBI" id="CHEBI:58534"/>
        <dbReference type="ChEBI" id="CHEBI:91004"/>
        <dbReference type="EC" id="3.2.1.85"/>
    </reaction>
</comment>
<comment type="pathway">
    <text evidence="1">Carbohydrate metabolism; lactose degradation; D-galactose 6-phosphate and beta-D-glucose from lactose 6-phosphate: step 1/1.</text>
</comment>
<comment type="similarity">
    <text evidence="1">Belongs to the glycosyl hydrolase 1 family.</text>
</comment>
<reference key="1">
    <citation type="journal article" date="2002" name="Proc. Natl. Acad. Sci. U.S.A.">
        <title>Genome sequence and comparative microarray analysis of serotype M18 group A Streptococcus strains associated with acute rheumatic fever outbreaks.</title>
        <authorList>
            <person name="Smoot J.C."/>
            <person name="Barbian K.D."/>
            <person name="Van Gompel J.J."/>
            <person name="Smoot L.M."/>
            <person name="Chaussee M.S."/>
            <person name="Sylva G.L."/>
            <person name="Sturdevant D.E."/>
            <person name="Ricklefs S.M."/>
            <person name="Porcella S.F."/>
            <person name="Parkins L.D."/>
            <person name="Beres S.B."/>
            <person name="Campbell D.S."/>
            <person name="Smith T.M."/>
            <person name="Zhang Q."/>
            <person name="Kapur V."/>
            <person name="Daly J.A."/>
            <person name="Veasy L.G."/>
            <person name="Musser J.M."/>
        </authorList>
    </citation>
    <scope>NUCLEOTIDE SEQUENCE [LARGE SCALE GENOMIC DNA]</scope>
    <source>
        <strain>MGAS8232</strain>
    </source>
</reference>